<reference key="1">
    <citation type="journal article" date="2006" name="J. Bacteriol.">
        <title>Complete genome sequence of Yersinia pestis strains Antiqua and Nepal516: evidence of gene reduction in an emerging pathogen.</title>
        <authorList>
            <person name="Chain P.S.G."/>
            <person name="Hu P."/>
            <person name="Malfatti S.A."/>
            <person name="Radnedge L."/>
            <person name="Larimer F."/>
            <person name="Vergez L.M."/>
            <person name="Worsham P."/>
            <person name="Chu M.C."/>
            <person name="Andersen G.L."/>
        </authorList>
    </citation>
    <scope>NUCLEOTIDE SEQUENCE [LARGE SCALE GENOMIC DNA]</scope>
    <source>
        <strain>Antiqua</strain>
    </source>
</reference>
<accession>Q1C3K9</accession>
<evidence type="ECO:0000255" key="1">
    <source>
        <dbReference type="HAMAP-Rule" id="MF_02001"/>
    </source>
</evidence>
<evidence type="ECO:0000255" key="2">
    <source>
        <dbReference type="PROSITE-ProRule" id="PRU00285"/>
    </source>
</evidence>
<organism>
    <name type="scientific">Yersinia pestis bv. Antiqua (strain Antiqua)</name>
    <dbReference type="NCBI Taxonomy" id="360102"/>
    <lineage>
        <taxon>Bacteria</taxon>
        <taxon>Pseudomonadati</taxon>
        <taxon>Pseudomonadota</taxon>
        <taxon>Gammaproteobacteria</taxon>
        <taxon>Enterobacterales</taxon>
        <taxon>Yersiniaceae</taxon>
        <taxon>Yersinia</taxon>
    </lineage>
</organism>
<dbReference type="EMBL" id="CP000308">
    <property type="protein sequence ID" value="ABG14963.1"/>
    <property type="molecule type" value="Genomic_DNA"/>
</dbReference>
<dbReference type="RefSeq" id="WP_002209635.1">
    <property type="nucleotide sequence ID" value="NZ_CP009906.1"/>
</dbReference>
<dbReference type="SMR" id="Q1C3K9"/>
<dbReference type="GeneID" id="57974634"/>
<dbReference type="KEGG" id="ypa:YPA_3001"/>
<dbReference type="Proteomes" id="UP000001971">
    <property type="component" value="Chromosome"/>
</dbReference>
<dbReference type="GO" id="GO:0005737">
    <property type="term" value="C:cytoplasm"/>
    <property type="evidence" value="ECO:0007669"/>
    <property type="project" value="UniProtKB-SubCell"/>
</dbReference>
<dbReference type="GO" id="GO:0050821">
    <property type="term" value="P:protein stabilization"/>
    <property type="evidence" value="ECO:0007669"/>
    <property type="project" value="UniProtKB-UniRule"/>
</dbReference>
<dbReference type="CDD" id="cd06470">
    <property type="entry name" value="ACD_IbpA-B_like"/>
    <property type="match status" value="1"/>
</dbReference>
<dbReference type="Gene3D" id="2.60.40.790">
    <property type="match status" value="1"/>
</dbReference>
<dbReference type="HAMAP" id="MF_02001">
    <property type="entry name" value="HSP20_IbpB"/>
    <property type="match status" value="1"/>
</dbReference>
<dbReference type="InterPro" id="IPR002068">
    <property type="entry name" value="A-crystallin/Hsp20_dom"/>
</dbReference>
<dbReference type="InterPro" id="IPR037913">
    <property type="entry name" value="ACD_IbpA/B"/>
</dbReference>
<dbReference type="InterPro" id="IPR008978">
    <property type="entry name" value="HSP20-like_chaperone"/>
</dbReference>
<dbReference type="InterPro" id="IPR022848">
    <property type="entry name" value="HSP20_IbpB"/>
</dbReference>
<dbReference type="NCBIfam" id="NF008618">
    <property type="entry name" value="PRK11597.1"/>
    <property type="match status" value="1"/>
</dbReference>
<dbReference type="PANTHER" id="PTHR47062">
    <property type="match status" value="1"/>
</dbReference>
<dbReference type="PANTHER" id="PTHR47062:SF2">
    <property type="entry name" value="SMALL HEAT SHOCK PROTEIN IBPB"/>
    <property type="match status" value="1"/>
</dbReference>
<dbReference type="Pfam" id="PF00011">
    <property type="entry name" value="HSP20"/>
    <property type="match status" value="1"/>
</dbReference>
<dbReference type="SUPFAM" id="SSF49764">
    <property type="entry name" value="HSP20-like chaperones"/>
    <property type="match status" value="1"/>
</dbReference>
<dbReference type="PROSITE" id="PS01031">
    <property type="entry name" value="SHSP"/>
    <property type="match status" value="1"/>
</dbReference>
<comment type="function">
    <text evidence="1">Associates with aggregated proteins, together with IbpA, to stabilize and protect them from irreversible denaturation and extensive proteolysis during heat shock and oxidative stress. Aggregated proteins bound to the IbpAB complex are more efficiently refolded and reactivated by the ATP-dependent chaperone systems ClpB and DnaK/DnaJ/GrpE. Its activity is ATP-independent.</text>
</comment>
<comment type="subunit">
    <text evidence="1">Homodimer. Forms homomultimers of about 100-150 subunits at optimal growth temperatures. Conformation changes to oligomers at high temperatures or high ionic concentrations. The decrease in size of the multimers is accompanied by an increase in chaperone activity.</text>
</comment>
<comment type="subcellular location">
    <subcellularLocation>
        <location evidence="1">Cytoplasm</location>
    </subcellularLocation>
</comment>
<comment type="domain">
    <text evidence="1">The N- and C-terminal flexible termini are involved in oligomerization and in the binding of non-native substrate proteins, and are essential for chaperone activity.</text>
</comment>
<comment type="similarity">
    <text evidence="1 2">Belongs to the small heat shock protein (HSP20) family.</text>
</comment>
<gene>
    <name evidence="1" type="primary">ibpB</name>
    <name type="ordered locus">YPA_3001</name>
</gene>
<name>IBPB_YERPA</name>
<keyword id="KW-0143">Chaperone</keyword>
<keyword id="KW-0963">Cytoplasm</keyword>
<keyword id="KW-0346">Stress response</keyword>
<feature type="chain" id="PRO_1000022033" description="Small heat shock protein IbpB">
    <location>
        <begin position="1"/>
        <end position="154"/>
    </location>
</feature>
<feature type="domain" description="sHSP" evidence="2">
    <location>
        <begin position="26"/>
        <end position="137"/>
    </location>
</feature>
<sequence>MRNYDLSPLLRQWIGFDKLASTMQGGQEPQGFPPYNIEKTDDNHYRISLALAGFKQSELDIEVEGPRLTVRGKPTPVEKQVEYLHQGLVRKEFSLTFTLAEHLNVDNAQFENGLLHIDLLRQVPEALQPQRIAIGSATPQERQVLESPEAPDQQ</sequence>
<proteinExistence type="inferred from homology"/>
<protein>
    <recommendedName>
        <fullName evidence="1">Small heat shock protein IbpB</fullName>
    </recommendedName>
    <alternativeName>
        <fullName evidence="1">16 kDa heat shock protein B</fullName>
    </alternativeName>
</protein>